<feature type="chain" id="PRO_0000408194" description="Heterogeneous nuclear rnp K-like protein 2">
    <location>
        <begin position="1"/>
        <end position="381"/>
    </location>
</feature>
<feature type="domain" description="KH 1" evidence="3">
    <location>
        <begin position="43"/>
        <end position="107"/>
    </location>
</feature>
<feature type="domain" description="KH 2" evidence="3">
    <location>
        <begin position="156"/>
        <end position="221"/>
    </location>
</feature>
<feature type="domain" description="KH 3" evidence="3">
    <location>
        <begin position="258"/>
        <end position="326"/>
    </location>
</feature>
<feature type="region of interest" description="Disordered" evidence="4">
    <location>
        <begin position="1"/>
        <end position="34"/>
    </location>
</feature>
<feature type="region of interest" description="Disordered" evidence="4">
    <location>
        <begin position="344"/>
        <end position="381"/>
    </location>
</feature>
<feature type="compositionally biased region" description="Low complexity" evidence="4">
    <location>
        <begin position="15"/>
        <end position="33"/>
    </location>
</feature>
<feature type="compositionally biased region" description="Basic and acidic residues" evidence="4">
    <location>
        <begin position="370"/>
        <end position="381"/>
    </location>
</feature>
<feature type="modified residue" description="Phosphoserine" evidence="2">
    <location>
        <position position="358"/>
    </location>
</feature>
<feature type="modified residue" description="Phosphoserine" evidence="2">
    <location>
        <position position="360"/>
    </location>
</feature>
<feature type="modified residue" description="Phosphoserine" evidence="2">
    <location>
        <position position="362"/>
    </location>
</feature>
<sequence length="381" mass="41683">MSQFFEAATPVAIPTNNTNGGSSDAGSAATGGAPVVGTTAQPTINHRLLLSLKEAAKIIGTKGSTISRIRAANAVKIGISEKVPGCSDRILSCAGNVINVANAIGDIVDVLNKRNPENEDAAEGEAEEHYYFHFLNHILPAPSKDEIRDLQQLEDIGYVRLIVANSHISSIIGKAGATIKSLINKHGVKIVASKDFLPASDERIIEIQGFPGSITNVLIEISEIILSDVDVRFSTERSYFPHLKKSSGEPTSPSTSSNTRIELKIPELYVGAIIGRGMNRIKNLKTFTKTNIVVERKDDDDKDENFRKFIITSKFPKNVKLAESMLLKNLNTEIEKRENYKRKLEAAEGDATVVTERSDSASFLEEKEEPQENHDNKEEQS</sequence>
<evidence type="ECO:0000250" key="1"/>
<evidence type="ECO:0000250" key="2">
    <source>
        <dbReference type="UniProtKB" id="P38199"/>
    </source>
</evidence>
<evidence type="ECO:0000255" key="3">
    <source>
        <dbReference type="PROSITE-ProRule" id="PRU00117"/>
    </source>
</evidence>
<evidence type="ECO:0000256" key="4">
    <source>
        <dbReference type="SAM" id="MobiDB-lite"/>
    </source>
</evidence>
<evidence type="ECO:0000305" key="5"/>
<keyword id="KW-0156">Chromatin regulator</keyword>
<keyword id="KW-0158">Chromosome</keyword>
<keyword id="KW-0963">Cytoplasm</keyword>
<keyword id="KW-0509">mRNA transport</keyword>
<keyword id="KW-0539">Nucleus</keyword>
<keyword id="KW-0597">Phosphoprotein</keyword>
<keyword id="KW-0677">Repeat</keyword>
<keyword id="KW-0694">RNA-binding</keyword>
<keyword id="KW-0779">Telomere</keyword>
<keyword id="KW-0810">Translation regulation</keyword>
<keyword id="KW-0813">Transport</keyword>
<organism>
    <name type="scientific">Saccharomyces cerevisiae (strain YJM789)</name>
    <name type="common">Baker's yeast</name>
    <dbReference type="NCBI Taxonomy" id="307796"/>
    <lineage>
        <taxon>Eukaryota</taxon>
        <taxon>Fungi</taxon>
        <taxon>Dikarya</taxon>
        <taxon>Ascomycota</taxon>
        <taxon>Saccharomycotina</taxon>
        <taxon>Saccharomycetes</taxon>
        <taxon>Saccharomycetales</taxon>
        <taxon>Saccharomycetaceae</taxon>
        <taxon>Saccharomyces</taxon>
    </lineage>
</organism>
<accession>A6ZKR5</accession>
<comment type="function">
    <text evidence="1">RNA-binding protein involved in the correct localization of transcripts in the cell. RNA localization is a widespread mechanism for achieving localized protein synthesis. Required for the asymmetric localization to the daughter cell nucleus of the ASH1 transcript, coding for a specific repressor of transcription. Overexpression inhibits translation of the ASH1 transcript. Involved in the stability of transcripts, like the MTL1 mRNA. Involved in structural and functional organization of telomeric chromatin and regulates silencing at the HMR locus (By similarity).</text>
</comment>
<comment type="subunit">
    <text evidence="1">Binds RNA.</text>
</comment>
<comment type="subcellular location">
    <subcellularLocation>
        <location evidence="1">Cytoplasm</location>
    </subcellularLocation>
    <subcellularLocation>
        <location evidence="1">Cytoplasm</location>
        <location evidence="1">P-body</location>
    </subcellularLocation>
    <subcellularLocation>
        <location evidence="1">Nucleus</location>
    </subcellularLocation>
    <subcellularLocation>
        <location evidence="1">Chromosome</location>
        <location evidence="1">Telomere</location>
    </subcellularLocation>
</comment>
<comment type="PTM">
    <text evidence="1">Phosphorylated by the plasma membrane-Anchored casein kinase YCK1. Phosphorylation at its C-terminus reduces its RNA-binding capacity (By similarity).</text>
</comment>
<comment type="similarity">
    <text evidence="5">Belongs to the HEK2 family.</text>
</comment>
<proteinExistence type="inferred from homology"/>
<dbReference type="EMBL" id="AAFW02000011">
    <property type="protein sequence ID" value="EDN64584.1"/>
    <property type="molecule type" value="Genomic_DNA"/>
</dbReference>
<dbReference type="SMR" id="A6ZKR5"/>
<dbReference type="HOGENOM" id="CLU_022670_2_0_1"/>
<dbReference type="Proteomes" id="UP000007060">
    <property type="component" value="Unassembled WGS sequence"/>
</dbReference>
<dbReference type="GO" id="GO:0000781">
    <property type="term" value="C:chromosome, telomeric region"/>
    <property type="evidence" value="ECO:0007669"/>
    <property type="project" value="UniProtKB-SubCell"/>
</dbReference>
<dbReference type="GO" id="GO:0005634">
    <property type="term" value="C:nucleus"/>
    <property type="evidence" value="ECO:0007669"/>
    <property type="project" value="UniProtKB-SubCell"/>
</dbReference>
<dbReference type="GO" id="GO:0000932">
    <property type="term" value="C:P-body"/>
    <property type="evidence" value="ECO:0007669"/>
    <property type="project" value="UniProtKB-SubCell"/>
</dbReference>
<dbReference type="GO" id="GO:0003723">
    <property type="term" value="F:RNA binding"/>
    <property type="evidence" value="ECO:0007669"/>
    <property type="project" value="UniProtKB-KW"/>
</dbReference>
<dbReference type="GO" id="GO:0006325">
    <property type="term" value="P:chromatin organization"/>
    <property type="evidence" value="ECO:0007669"/>
    <property type="project" value="UniProtKB-KW"/>
</dbReference>
<dbReference type="GO" id="GO:0051028">
    <property type="term" value="P:mRNA transport"/>
    <property type="evidence" value="ECO:0007669"/>
    <property type="project" value="UniProtKB-KW"/>
</dbReference>
<dbReference type="GO" id="GO:0006417">
    <property type="term" value="P:regulation of translation"/>
    <property type="evidence" value="ECO:0007669"/>
    <property type="project" value="UniProtKB-KW"/>
</dbReference>
<dbReference type="CDD" id="cd00105">
    <property type="entry name" value="KH-I"/>
    <property type="match status" value="1"/>
</dbReference>
<dbReference type="CDD" id="cd22455">
    <property type="entry name" value="KH-I_Rnc1_rpt1"/>
    <property type="match status" value="1"/>
</dbReference>
<dbReference type="CDD" id="cd22456">
    <property type="entry name" value="KH-I_Rnc1_rpt2"/>
    <property type="match status" value="1"/>
</dbReference>
<dbReference type="Gene3D" id="3.30.1370.10">
    <property type="entry name" value="K Homology domain, type 1"/>
    <property type="match status" value="3"/>
</dbReference>
<dbReference type="InterPro" id="IPR004087">
    <property type="entry name" value="KH_dom"/>
</dbReference>
<dbReference type="InterPro" id="IPR004088">
    <property type="entry name" value="KH_dom_type_1"/>
</dbReference>
<dbReference type="InterPro" id="IPR036612">
    <property type="entry name" value="KH_dom_type_1_sf"/>
</dbReference>
<dbReference type="PANTHER" id="PTHR10288">
    <property type="entry name" value="KH DOMAIN CONTAINING RNA BINDING PROTEIN"/>
    <property type="match status" value="1"/>
</dbReference>
<dbReference type="Pfam" id="PF00013">
    <property type="entry name" value="KH_1"/>
    <property type="match status" value="3"/>
</dbReference>
<dbReference type="SMART" id="SM00322">
    <property type="entry name" value="KH"/>
    <property type="match status" value="3"/>
</dbReference>
<dbReference type="SUPFAM" id="SSF54791">
    <property type="entry name" value="Eukaryotic type KH-domain (KH-domain type I)"/>
    <property type="match status" value="3"/>
</dbReference>
<dbReference type="PROSITE" id="PS50084">
    <property type="entry name" value="KH_TYPE_1"/>
    <property type="match status" value="3"/>
</dbReference>
<gene>
    <name type="primary">HEK2</name>
    <name type="synonym">KHD1</name>
    <name type="ORF">SCY_0185</name>
</gene>
<name>HEK2_YEAS7</name>
<protein>
    <recommendedName>
        <fullName>Heterogeneous nuclear rnp K-like protein 2</fullName>
    </recommendedName>
    <alternativeName>
        <fullName>KH domain-containing protein 1</fullName>
    </alternativeName>
</protein>
<reference key="1">
    <citation type="journal article" date="2007" name="Proc. Natl. Acad. Sci. U.S.A.">
        <title>Genome sequencing and comparative analysis of Saccharomyces cerevisiae strain YJM789.</title>
        <authorList>
            <person name="Wei W."/>
            <person name="McCusker J.H."/>
            <person name="Hyman R.W."/>
            <person name="Jones T."/>
            <person name="Ning Y."/>
            <person name="Cao Z."/>
            <person name="Gu Z."/>
            <person name="Bruno D."/>
            <person name="Miranda M."/>
            <person name="Nguyen M."/>
            <person name="Wilhelmy J."/>
            <person name="Komp C."/>
            <person name="Tamse R."/>
            <person name="Wang X."/>
            <person name="Jia P."/>
            <person name="Luedi P."/>
            <person name="Oefner P.J."/>
            <person name="David L."/>
            <person name="Dietrich F.S."/>
            <person name="Li Y."/>
            <person name="Davis R.W."/>
            <person name="Steinmetz L.M."/>
        </authorList>
    </citation>
    <scope>NUCLEOTIDE SEQUENCE [LARGE SCALE GENOMIC DNA]</scope>
    <source>
        <strain>YJM789</strain>
    </source>
</reference>